<accession>A7GJS8</accession>
<dbReference type="EC" id="4.3.3.6" evidence="1"/>
<dbReference type="EMBL" id="CP000764">
    <property type="protein sequence ID" value="ABS20386.1"/>
    <property type="molecule type" value="Genomic_DNA"/>
</dbReference>
<dbReference type="RefSeq" id="WP_011983157.1">
    <property type="nucleotide sequence ID" value="NC_009674.1"/>
</dbReference>
<dbReference type="SMR" id="A7GJS8"/>
<dbReference type="STRING" id="315749.Bcer98_0010"/>
<dbReference type="GeneID" id="33895308"/>
<dbReference type="KEGG" id="bcy:Bcer98_0010"/>
<dbReference type="eggNOG" id="COG0214">
    <property type="taxonomic scope" value="Bacteria"/>
</dbReference>
<dbReference type="HOGENOM" id="CLU_055352_1_0_9"/>
<dbReference type="OrthoDB" id="9772545at2"/>
<dbReference type="UniPathway" id="UPA00245"/>
<dbReference type="Proteomes" id="UP000002300">
    <property type="component" value="Chromosome"/>
</dbReference>
<dbReference type="GO" id="GO:0036381">
    <property type="term" value="F:pyridoxal 5'-phosphate synthase (glutamine hydrolysing) activity"/>
    <property type="evidence" value="ECO:0007669"/>
    <property type="project" value="UniProtKB-UniRule"/>
</dbReference>
<dbReference type="GO" id="GO:0006520">
    <property type="term" value="P:amino acid metabolic process"/>
    <property type="evidence" value="ECO:0007669"/>
    <property type="project" value="TreeGrafter"/>
</dbReference>
<dbReference type="GO" id="GO:0042823">
    <property type="term" value="P:pyridoxal phosphate biosynthetic process"/>
    <property type="evidence" value="ECO:0007669"/>
    <property type="project" value="UniProtKB-UniRule"/>
</dbReference>
<dbReference type="GO" id="GO:0008615">
    <property type="term" value="P:pyridoxine biosynthetic process"/>
    <property type="evidence" value="ECO:0007669"/>
    <property type="project" value="TreeGrafter"/>
</dbReference>
<dbReference type="CDD" id="cd04727">
    <property type="entry name" value="pdxS"/>
    <property type="match status" value="1"/>
</dbReference>
<dbReference type="FunFam" id="3.20.20.70:FF:000001">
    <property type="entry name" value="Pyridoxine biosynthesis protein PDX1"/>
    <property type="match status" value="1"/>
</dbReference>
<dbReference type="Gene3D" id="3.20.20.70">
    <property type="entry name" value="Aldolase class I"/>
    <property type="match status" value="1"/>
</dbReference>
<dbReference type="HAMAP" id="MF_01824">
    <property type="entry name" value="PdxS"/>
    <property type="match status" value="1"/>
</dbReference>
<dbReference type="InterPro" id="IPR013785">
    <property type="entry name" value="Aldolase_TIM"/>
</dbReference>
<dbReference type="InterPro" id="IPR001852">
    <property type="entry name" value="PdxS/SNZ"/>
</dbReference>
<dbReference type="InterPro" id="IPR033755">
    <property type="entry name" value="PdxS/SNZ_N"/>
</dbReference>
<dbReference type="InterPro" id="IPR011060">
    <property type="entry name" value="RibuloseP-bd_barrel"/>
</dbReference>
<dbReference type="NCBIfam" id="NF003215">
    <property type="entry name" value="PRK04180.1"/>
    <property type="match status" value="1"/>
</dbReference>
<dbReference type="NCBIfam" id="TIGR00343">
    <property type="entry name" value="pyridoxal 5'-phosphate synthase lyase subunit PdxS"/>
    <property type="match status" value="1"/>
</dbReference>
<dbReference type="PANTHER" id="PTHR31829">
    <property type="entry name" value="PYRIDOXAL 5'-PHOSPHATE SYNTHASE SUBUNIT SNZ1-RELATED"/>
    <property type="match status" value="1"/>
</dbReference>
<dbReference type="PANTHER" id="PTHR31829:SF0">
    <property type="entry name" value="PYRIDOXAL 5'-PHOSPHATE SYNTHASE SUBUNIT SNZ1-RELATED"/>
    <property type="match status" value="1"/>
</dbReference>
<dbReference type="Pfam" id="PF01680">
    <property type="entry name" value="SOR_SNZ"/>
    <property type="match status" value="1"/>
</dbReference>
<dbReference type="PIRSF" id="PIRSF029271">
    <property type="entry name" value="Pdx1"/>
    <property type="match status" value="1"/>
</dbReference>
<dbReference type="SUPFAM" id="SSF51366">
    <property type="entry name" value="Ribulose-phoshate binding barrel"/>
    <property type="match status" value="1"/>
</dbReference>
<dbReference type="PROSITE" id="PS01235">
    <property type="entry name" value="PDXS_SNZ_1"/>
    <property type="match status" value="1"/>
</dbReference>
<dbReference type="PROSITE" id="PS51129">
    <property type="entry name" value="PDXS_SNZ_2"/>
    <property type="match status" value="1"/>
</dbReference>
<protein>
    <recommendedName>
        <fullName evidence="1">Pyridoxal 5'-phosphate synthase subunit PdxS</fullName>
        <shortName evidence="1">PLP synthase subunit PdxS</shortName>
        <ecNumber evidence="1">4.3.3.6</ecNumber>
    </recommendedName>
    <alternativeName>
        <fullName evidence="1">Pdx1</fullName>
    </alternativeName>
</protein>
<sequence length="295" mass="31810">MTNVTGTERVKRGMAEMQKGGVIMDVVNAEQAKIAEEAGAVAVMALERVPADIRAAGGVARMADPTIVEEVMGAVSIPVMAKCRIGHLVEARVLESLGVDYIDESEVLTPADEVNHLNKRDYTVPFVCGCRDIGEAARRIAEGASMLRTKGEPGTGNIVEAVRHMRQVNAEIRQVANLREDELMTYAKNTGAPYEVLLEIKRLGRLPVVNFAAGGVATPADAALMMQLGADGVFVGSGIFKSENPEKFARAIVEATTHYEDYELIANLSKGLGDAMKGVEISTLLPEQRMQERGW</sequence>
<gene>
    <name evidence="1" type="primary">pdxS</name>
    <name type="ordered locus">Bcer98_0010</name>
</gene>
<proteinExistence type="inferred from homology"/>
<comment type="function">
    <text evidence="1">Catalyzes the formation of pyridoxal 5'-phosphate from ribose 5-phosphate (RBP), glyceraldehyde 3-phosphate (G3P) and ammonia. The ammonia is provided by the PdxT subunit. Can also use ribulose 5-phosphate and dihydroxyacetone phosphate as substrates, resulting from enzyme-catalyzed isomerization of RBP and G3P, respectively.</text>
</comment>
<comment type="catalytic activity">
    <reaction evidence="1">
        <text>aldehydo-D-ribose 5-phosphate + D-glyceraldehyde 3-phosphate + L-glutamine = pyridoxal 5'-phosphate + L-glutamate + phosphate + 3 H2O + H(+)</text>
        <dbReference type="Rhea" id="RHEA:31507"/>
        <dbReference type="ChEBI" id="CHEBI:15377"/>
        <dbReference type="ChEBI" id="CHEBI:15378"/>
        <dbReference type="ChEBI" id="CHEBI:29985"/>
        <dbReference type="ChEBI" id="CHEBI:43474"/>
        <dbReference type="ChEBI" id="CHEBI:58273"/>
        <dbReference type="ChEBI" id="CHEBI:58359"/>
        <dbReference type="ChEBI" id="CHEBI:59776"/>
        <dbReference type="ChEBI" id="CHEBI:597326"/>
        <dbReference type="EC" id="4.3.3.6"/>
    </reaction>
</comment>
<comment type="pathway">
    <text evidence="1">Cofactor biosynthesis; pyridoxal 5'-phosphate biosynthesis.</text>
</comment>
<comment type="subunit">
    <text evidence="1">In the presence of PdxT, forms a dodecamer of heterodimers.</text>
</comment>
<comment type="similarity">
    <text evidence="1">Belongs to the PdxS/SNZ family.</text>
</comment>
<organism>
    <name type="scientific">Bacillus cytotoxicus (strain DSM 22905 / CIP 110041 / 391-98 / NVH 391-98)</name>
    <dbReference type="NCBI Taxonomy" id="315749"/>
    <lineage>
        <taxon>Bacteria</taxon>
        <taxon>Bacillati</taxon>
        <taxon>Bacillota</taxon>
        <taxon>Bacilli</taxon>
        <taxon>Bacillales</taxon>
        <taxon>Bacillaceae</taxon>
        <taxon>Bacillus</taxon>
        <taxon>Bacillus cereus group</taxon>
    </lineage>
</organism>
<reference key="1">
    <citation type="journal article" date="2008" name="Chem. Biol. Interact.">
        <title>Extending the Bacillus cereus group genomics to putative food-borne pathogens of different toxicity.</title>
        <authorList>
            <person name="Lapidus A."/>
            <person name="Goltsman E."/>
            <person name="Auger S."/>
            <person name="Galleron N."/>
            <person name="Segurens B."/>
            <person name="Dossat C."/>
            <person name="Land M.L."/>
            <person name="Broussolle V."/>
            <person name="Brillard J."/>
            <person name="Guinebretiere M.-H."/>
            <person name="Sanchis V."/>
            <person name="Nguen-the C."/>
            <person name="Lereclus D."/>
            <person name="Richardson P."/>
            <person name="Wincker P."/>
            <person name="Weissenbach J."/>
            <person name="Ehrlich S.D."/>
            <person name="Sorokin A."/>
        </authorList>
    </citation>
    <scope>NUCLEOTIDE SEQUENCE [LARGE SCALE GENOMIC DNA]</scope>
    <source>
        <strain>DSM 22905 / CIP 110041 / 391-98 / NVH 391-98</strain>
    </source>
</reference>
<evidence type="ECO:0000255" key="1">
    <source>
        <dbReference type="HAMAP-Rule" id="MF_01824"/>
    </source>
</evidence>
<name>PDXS_BACCN</name>
<feature type="chain" id="PRO_1000088404" description="Pyridoxal 5'-phosphate synthase subunit PdxS">
    <location>
        <begin position="1"/>
        <end position="295"/>
    </location>
</feature>
<feature type="active site" description="Schiff-base intermediate with D-ribose 5-phosphate" evidence="1">
    <location>
        <position position="82"/>
    </location>
</feature>
<feature type="binding site" evidence="1">
    <location>
        <position position="25"/>
    </location>
    <ligand>
        <name>D-ribose 5-phosphate</name>
        <dbReference type="ChEBI" id="CHEBI:78346"/>
    </ligand>
</feature>
<feature type="binding site" evidence="1">
    <location>
        <position position="154"/>
    </location>
    <ligand>
        <name>D-ribose 5-phosphate</name>
        <dbReference type="ChEBI" id="CHEBI:78346"/>
    </ligand>
</feature>
<feature type="binding site" evidence="1">
    <location>
        <position position="166"/>
    </location>
    <ligand>
        <name>D-glyceraldehyde 3-phosphate</name>
        <dbReference type="ChEBI" id="CHEBI:59776"/>
    </ligand>
</feature>
<feature type="binding site" evidence="1">
    <location>
        <position position="215"/>
    </location>
    <ligand>
        <name>D-ribose 5-phosphate</name>
        <dbReference type="ChEBI" id="CHEBI:78346"/>
    </ligand>
</feature>
<feature type="binding site" evidence="1">
    <location>
        <begin position="236"/>
        <end position="237"/>
    </location>
    <ligand>
        <name>D-ribose 5-phosphate</name>
        <dbReference type="ChEBI" id="CHEBI:78346"/>
    </ligand>
</feature>
<keyword id="KW-0456">Lyase</keyword>
<keyword id="KW-0663">Pyridoxal phosphate</keyword>
<keyword id="KW-0704">Schiff base</keyword>